<comment type="function">
    <text evidence="1">The glycine cleavage system catalyzes the degradation of glycine. The H protein shuttles the methylamine group of glycine from the P protein to the T protein.</text>
</comment>
<comment type="cofactor">
    <cofactor evidence="1">
        <name>(R)-lipoate</name>
        <dbReference type="ChEBI" id="CHEBI:83088"/>
    </cofactor>
    <text evidence="1">Binds 1 lipoyl cofactor covalently.</text>
</comment>
<comment type="subunit">
    <text evidence="1">The glycine cleavage system is composed of four proteins: P, T, L and H.</text>
</comment>
<comment type="similarity">
    <text evidence="1">Belongs to the GcvH family.</text>
</comment>
<evidence type="ECO:0000255" key="1">
    <source>
        <dbReference type="HAMAP-Rule" id="MF_00272"/>
    </source>
</evidence>
<evidence type="ECO:0000255" key="2">
    <source>
        <dbReference type="PROSITE-ProRule" id="PRU01066"/>
    </source>
</evidence>
<gene>
    <name evidence="1" type="primary">gcvH</name>
    <name type="ordered locus">Smlt3657</name>
</gene>
<dbReference type="EMBL" id="AM743169">
    <property type="protein sequence ID" value="CAQ47073.1"/>
    <property type="molecule type" value="Genomic_DNA"/>
</dbReference>
<dbReference type="RefSeq" id="WP_005410701.1">
    <property type="nucleotide sequence ID" value="NC_010943.1"/>
</dbReference>
<dbReference type="SMR" id="B2FR20"/>
<dbReference type="EnsemblBacteria" id="CAQ47073">
    <property type="protein sequence ID" value="CAQ47073"/>
    <property type="gene ID" value="Smlt3657"/>
</dbReference>
<dbReference type="GeneID" id="93834647"/>
<dbReference type="KEGG" id="sml:Smlt3657"/>
<dbReference type="eggNOG" id="COG0509">
    <property type="taxonomic scope" value="Bacteria"/>
</dbReference>
<dbReference type="HOGENOM" id="CLU_097408_2_0_6"/>
<dbReference type="Proteomes" id="UP000008840">
    <property type="component" value="Chromosome"/>
</dbReference>
<dbReference type="GO" id="GO:0005829">
    <property type="term" value="C:cytosol"/>
    <property type="evidence" value="ECO:0007669"/>
    <property type="project" value="TreeGrafter"/>
</dbReference>
<dbReference type="GO" id="GO:0005960">
    <property type="term" value="C:glycine cleavage complex"/>
    <property type="evidence" value="ECO:0007669"/>
    <property type="project" value="InterPro"/>
</dbReference>
<dbReference type="GO" id="GO:0019464">
    <property type="term" value="P:glycine decarboxylation via glycine cleavage system"/>
    <property type="evidence" value="ECO:0007669"/>
    <property type="project" value="UniProtKB-UniRule"/>
</dbReference>
<dbReference type="CDD" id="cd06848">
    <property type="entry name" value="GCS_H"/>
    <property type="match status" value="1"/>
</dbReference>
<dbReference type="Gene3D" id="2.40.50.100">
    <property type="match status" value="1"/>
</dbReference>
<dbReference type="HAMAP" id="MF_00272">
    <property type="entry name" value="GcvH"/>
    <property type="match status" value="1"/>
</dbReference>
<dbReference type="InterPro" id="IPR000089">
    <property type="entry name" value="Biotin_lipoyl"/>
</dbReference>
<dbReference type="InterPro" id="IPR002930">
    <property type="entry name" value="GCV_H"/>
</dbReference>
<dbReference type="InterPro" id="IPR033753">
    <property type="entry name" value="GCV_H/Fam206"/>
</dbReference>
<dbReference type="InterPro" id="IPR017453">
    <property type="entry name" value="GCV_H_sub"/>
</dbReference>
<dbReference type="InterPro" id="IPR011053">
    <property type="entry name" value="Single_hybrid_motif"/>
</dbReference>
<dbReference type="NCBIfam" id="TIGR00527">
    <property type="entry name" value="gcvH"/>
    <property type="match status" value="1"/>
</dbReference>
<dbReference type="NCBIfam" id="NF002270">
    <property type="entry name" value="PRK01202.1"/>
    <property type="match status" value="1"/>
</dbReference>
<dbReference type="PANTHER" id="PTHR11715">
    <property type="entry name" value="GLYCINE CLEAVAGE SYSTEM H PROTEIN"/>
    <property type="match status" value="1"/>
</dbReference>
<dbReference type="PANTHER" id="PTHR11715:SF3">
    <property type="entry name" value="GLYCINE CLEAVAGE SYSTEM H PROTEIN-RELATED"/>
    <property type="match status" value="1"/>
</dbReference>
<dbReference type="Pfam" id="PF01597">
    <property type="entry name" value="GCV_H"/>
    <property type="match status" value="1"/>
</dbReference>
<dbReference type="SUPFAM" id="SSF51230">
    <property type="entry name" value="Single hybrid motif"/>
    <property type="match status" value="1"/>
</dbReference>
<dbReference type="PROSITE" id="PS50968">
    <property type="entry name" value="BIOTINYL_LIPOYL"/>
    <property type="match status" value="1"/>
</dbReference>
<proteinExistence type="inferred from homology"/>
<accession>B2FR20</accession>
<keyword id="KW-0450">Lipoyl</keyword>
<keyword id="KW-1185">Reference proteome</keyword>
<protein>
    <recommendedName>
        <fullName evidence="1">Glycine cleavage system H protein</fullName>
    </recommendedName>
</protein>
<reference key="1">
    <citation type="journal article" date="2008" name="Genome Biol.">
        <title>The complete genome, comparative and functional analysis of Stenotrophomonas maltophilia reveals an organism heavily shielded by drug resistance determinants.</title>
        <authorList>
            <person name="Crossman L.C."/>
            <person name="Gould V.C."/>
            <person name="Dow J.M."/>
            <person name="Vernikos G.S."/>
            <person name="Okazaki A."/>
            <person name="Sebaihia M."/>
            <person name="Saunders D."/>
            <person name="Arrowsmith C."/>
            <person name="Carver T."/>
            <person name="Peters N."/>
            <person name="Adlem E."/>
            <person name="Kerhornou A."/>
            <person name="Lord A."/>
            <person name="Murphy L."/>
            <person name="Seeger K."/>
            <person name="Squares R."/>
            <person name="Rutter S."/>
            <person name="Quail M.A."/>
            <person name="Rajandream M.A."/>
            <person name="Harris D."/>
            <person name="Churcher C."/>
            <person name="Bentley S.D."/>
            <person name="Parkhill J."/>
            <person name="Thomson N.R."/>
            <person name="Avison M.B."/>
        </authorList>
    </citation>
    <scope>NUCLEOTIDE SEQUENCE [LARGE SCALE GENOMIC DNA]</scope>
    <source>
        <strain>K279a</strain>
    </source>
</reference>
<sequence length="131" mass="14086">MSEIPGDLKFLKSHEWARVEGNGRVTVGISDHAQGLLGDLVYVELPEVGADAKAGEQIAVVESVKAASDVYSPISGKVVEVNSALSDKPETINEDAYGEGWMFVVELTNAEEVNELLDPDAYAEALENDDH</sequence>
<organism>
    <name type="scientific">Stenotrophomonas maltophilia (strain K279a)</name>
    <dbReference type="NCBI Taxonomy" id="522373"/>
    <lineage>
        <taxon>Bacteria</taxon>
        <taxon>Pseudomonadati</taxon>
        <taxon>Pseudomonadota</taxon>
        <taxon>Gammaproteobacteria</taxon>
        <taxon>Lysobacterales</taxon>
        <taxon>Lysobacteraceae</taxon>
        <taxon>Stenotrophomonas</taxon>
        <taxon>Stenotrophomonas maltophilia group</taxon>
    </lineage>
</organism>
<feature type="chain" id="PRO_1000114555" description="Glycine cleavage system H protein">
    <location>
        <begin position="1"/>
        <end position="131"/>
    </location>
</feature>
<feature type="domain" description="Lipoyl-binding" evidence="2">
    <location>
        <begin position="24"/>
        <end position="106"/>
    </location>
</feature>
<feature type="modified residue" description="N6-lipoyllysine" evidence="1">
    <location>
        <position position="65"/>
    </location>
</feature>
<name>GCSH_STRMK</name>